<comment type="function">
    <text evidence="1">May act at junctions between the membrane and the cytoskeleton.</text>
</comment>
<comment type="catalytic activity">
    <reaction evidence="6">
        <text>O-phospho-L-tyrosyl-[protein] + H2O = L-tyrosyl-[protein] + phosphate</text>
        <dbReference type="Rhea" id="RHEA:10684"/>
        <dbReference type="Rhea" id="RHEA-COMP:10136"/>
        <dbReference type="Rhea" id="RHEA-COMP:20101"/>
        <dbReference type="ChEBI" id="CHEBI:15377"/>
        <dbReference type="ChEBI" id="CHEBI:43474"/>
        <dbReference type="ChEBI" id="CHEBI:46858"/>
        <dbReference type="ChEBI" id="CHEBI:61978"/>
        <dbReference type="EC" id="3.1.3.48"/>
    </reaction>
</comment>
<comment type="subcellular location">
    <subcellularLocation>
        <location evidence="1">Cell membrane</location>
        <topology evidence="1">Peripheral membrane protein</topology>
        <orientation evidence="1">Cytoplasmic side</orientation>
    </subcellularLocation>
    <subcellularLocation>
        <location evidence="1">Cytoplasm</location>
        <location evidence="1">Cytoskeleton</location>
    </subcellularLocation>
</comment>
<comment type="similarity">
    <text evidence="8">Belongs to the protein-tyrosine phosphatase family. Non-receptor class subfamily.</text>
</comment>
<accession>A2ALK8</accession>
<sequence>MTSRLRALGGRINNTRTSELPKEKTRSEVICSIRFLDGLVQTFKVNKQDLGQSLLDMAYGHLGVTEKEYFGLQHGDDPVDSPRWLEASKPLRKQLKGGFPCTLHFRVRYFIPDPNTLQQEQTRHLYFLQLKMDVCEGRLTCPLNSAVVLASYAVQSHFGDFNSSIHHPGYLADSQFIPDQNDDFLSKVESLHEQHSGLKQSEAESCYINIARTLDFYGVELHGGRDLHNLDLMIGIASAGIAVYRKYICTSFYPWVNILKISFKRKKFFIHQRQKQAESREHIVAFNMLNYRSCKNLWKSCVEHHSFFQAKKLLPQEKNVLSQYWTLGSRNPKKSVNNQYCKKVIGGMVWNPVMRRSLSVERLETKSLPSRSPPITPNWRSPRLRHEIRKPRHSSADNLANEMTYITETEDVFYTYKGPLSPKDSDSEVSQNHSPHRESLSENNPAQSCLTQKSSSSVSPSSNAPGSCSPDGVDQRFLEDYHKVTKGGFVEDASQYYCDKSDDGDGYLVLIRITPDEEGRFGFNLKGGVDQKMPLVVSRINPESPADTCMPKLNEGDQIVLINGRDISEHTHDQVVMFIKASRESHSRELALVIRRKAVRSLAEIRSEDELSQLFPEAMFPACPEGGDSLEGSMELLKKGLESGTVLIQFEQLYRKKPGLAVSFAKLPQNLDKNRYKDVLPYDTTRVLLQGNEDYINASYVNMEMPAANLVNKYIATQGPLPNTCAQFWQVVWDQKLSLVVMLTTLTERGRTKCHQYWPDPPDIMDHGIFHIQCQTEDCTIAYVSREMLVTNTETGEEHTVTHLQYVAWPDHGVPDDSSDFLEFVKYVRSLRVDGEPALVHCSAGIGRTGVLVTMETAMCLIERNLPVYPLDIVRKMRDQRAMMVQTSSQYKFVCEAILRVYEEGLVQRLDPS</sequence>
<protein>
    <recommendedName>
        <fullName>Tyrosine-protein phosphatase non-receptor type 3</fullName>
        <ecNumber>3.1.3.48</ecNumber>
    </recommendedName>
</protein>
<keyword id="KW-1003">Cell membrane</keyword>
<keyword id="KW-0963">Cytoplasm</keyword>
<keyword id="KW-0206">Cytoskeleton</keyword>
<keyword id="KW-0378">Hydrolase</keyword>
<keyword id="KW-0472">Membrane</keyword>
<keyword id="KW-0597">Phosphoprotein</keyword>
<keyword id="KW-0904">Protein phosphatase</keyword>
<keyword id="KW-1185">Reference proteome</keyword>
<evidence type="ECO:0000250" key="1"/>
<evidence type="ECO:0000250" key="2">
    <source>
        <dbReference type="UniProtKB" id="P26045"/>
    </source>
</evidence>
<evidence type="ECO:0000255" key="3">
    <source>
        <dbReference type="PROSITE-ProRule" id="PRU00084"/>
    </source>
</evidence>
<evidence type="ECO:0000255" key="4">
    <source>
        <dbReference type="PROSITE-ProRule" id="PRU00143"/>
    </source>
</evidence>
<evidence type="ECO:0000255" key="5">
    <source>
        <dbReference type="PROSITE-ProRule" id="PRU00160"/>
    </source>
</evidence>
<evidence type="ECO:0000255" key="6">
    <source>
        <dbReference type="PROSITE-ProRule" id="PRU10044"/>
    </source>
</evidence>
<evidence type="ECO:0000256" key="7">
    <source>
        <dbReference type="SAM" id="MobiDB-lite"/>
    </source>
</evidence>
<evidence type="ECO:0000305" key="8"/>
<gene>
    <name type="primary">Ptpn3</name>
</gene>
<proteinExistence type="evidence at protein level"/>
<feature type="chain" id="PRO_0000320074" description="Tyrosine-protein phosphatase non-receptor type 3">
    <location>
        <begin position="1"/>
        <end position="913"/>
    </location>
</feature>
<feature type="domain" description="FERM" evidence="3">
    <location>
        <begin position="29"/>
        <end position="312"/>
    </location>
</feature>
<feature type="domain" description="PDZ" evidence="4">
    <location>
        <begin position="510"/>
        <end position="582"/>
    </location>
</feature>
<feature type="domain" description="Tyrosine-protein phosphatase" evidence="5">
    <location>
        <begin position="646"/>
        <end position="901"/>
    </location>
</feature>
<feature type="region of interest" description="Disordered" evidence="7">
    <location>
        <begin position="364"/>
        <end position="400"/>
    </location>
</feature>
<feature type="region of interest" description="Disordered" evidence="7">
    <location>
        <begin position="417"/>
        <end position="473"/>
    </location>
</feature>
<feature type="compositionally biased region" description="Basic residues" evidence="7">
    <location>
        <begin position="382"/>
        <end position="393"/>
    </location>
</feature>
<feature type="compositionally biased region" description="Polar residues" evidence="7">
    <location>
        <begin position="441"/>
        <end position="453"/>
    </location>
</feature>
<feature type="compositionally biased region" description="Low complexity" evidence="7">
    <location>
        <begin position="454"/>
        <end position="470"/>
    </location>
</feature>
<feature type="active site" description="Phosphocysteine intermediate" evidence="5 6">
    <location>
        <position position="842"/>
    </location>
</feature>
<feature type="binding site" evidence="1">
    <location>
        <position position="811"/>
    </location>
    <ligand>
        <name>substrate</name>
    </ligand>
</feature>
<feature type="binding site" evidence="1">
    <location>
        <begin position="842"/>
        <end position="848"/>
    </location>
    <ligand>
        <name>substrate</name>
    </ligand>
</feature>
<feature type="binding site" evidence="1">
    <location>
        <position position="886"/>
    </location>
    <ligand>
        <name>substrate</name>
    </ligand>
</feature>
<feature type="modified residue" description="Phosphoserine" evidence="2">
    <location>
        <position position="357"/>
    </location>
</feature>
<feature type="modified residue" description="Phosphoserine" evidence="2">
    <location>
        <position position="359"/>
    </location>
</feature>
<feature type="modified residue" description="Phosphoserine" evidence="2">
    <location>
        <position position="367"/>
    </location>
</feature>
<feature type="modified residue" description="Phosphothreonine" evidence="2">
    <location>
        <position position="376"/>
    </location>
</feature>
<feature type="modified residue" description="Phosphoserine" evidence="2">
    <location>
        <position position="381"/>
    </location>
</feature>
<feature type="modified residue" description="Phosphoserine" evidence="2">
    <location>
        <position position="425"/>
    </location>
</feature>
<dbReference type="EC" id="3.1.3.48"/>
<dbReference type="EMBL" id="AL805921">
    <property type="status" value="NOT_ANNOTATED_CDS"/>
    <property type="molecule type" value="Genomic_DNA"/>
</dbReference>
<dbReference type="CCDS" id="CCDS51181.1"/>
<dbReference type="RefSeq" id="NP_001371044.1">
    <property type="nucleotide sequence ID" value="NM_001384115.1"/>
</dbReference>
<dbReference type="RefSeq" id="NP_035337.2">
    <property type="nucleotide sequence ID" value="NM_011207.2"/>
</dbReference>
<dbReference type="RefSeq" id="XP_006538161.1">
    <property type="nucleotide sequence ID" value="XM_006538098.2"/>
</dbReference>
<dbReference type="RefSeq" id="XP_006538162.1">
    <property type="nucleotide sequence ID" value="XM_006538099.4"/>
</dbReference>
<dbReference type="RefSeq" id="XP_006538163.1">
    <property type="nucleotide sequence ID" value="XM_006538100.4"/>
</dbReference>
<dbReference type="SMR" id="A2ALK8"/>
<dbReference type="BioGRID" id="244476">
    <property type="interactions" value="6"/>
</dbReference>
<dbReference type="FunCoup" id="A2ALK8">
    <property type="interactions" value="284"/>
</dbReference>
<dbReference type="IntAct" id="A2ALK8">
    <property type="interactions" value="1"/>
</dbReference>
<dbReference type="MINT" id="A2ALK8"/>
<dbReference type="STRING" id="10090.ENSMUSP00000075063"/>
<dbReference type="iPTMnet" id="A2ALK8"/>
<dbReference type="PhosphoSitePlus" id="A2ALK8"/>
<dbReference type="PaxDb" id="10090-ENSMUSP00000075063"/>
<dbReference type="PeptideAtlas" id="A2ALK8"/>
<dbReference type="ProteomicsDB" id="301958"/>
<dbReference type="Antibodypedia" id="29434">
    <property type="antibodies" value="235 antibodies from 33 providers"/>
</dbReference>
<dbReference type="DNASU" id="545622"/>
<dbReference type="Ensembl" id="ENSMUST00000075637.11">
    <property type="protein sequence ID" value="ENSMUSP00000075063.5"/>
    <property type="gene ID" value="ENSMUSG00000038764.15"/>
</dbReference>
<dbReference type="GeneID" id="545622"/>
<dbReference type="KEGG" id="mmu:545622"/>
<dbReference type="UCSC" id="uc008sya.2">
    <property type="organism name" value="mouse"/>
</dbReference>
<dbReference type="AGR" id="MGI:105307"/>
<dbReference type="CTD" id="5774"/>
<dbReference type="MGI" id="MGI:105307">
    <property type="gene designation" value="Ptpn3"/>
</dbReference>
<dbReference type="VEuPathDB" id="HostDB:ENSMUSG00000038764"/>
<dbReference type="eggNOG" id="KOG0792">
    <property type="taxonomic scope" value="Eukaryota"/>
</dbReference>
<dbReference type="GeneTree" id="ENSGT00940000157888"/>
<dbReference type="HOGENOM" id="CLU_001645_7_0_1"/>
<dbReference type="InParanoid" id="A2ALK8"/>
<dbReference type="OMA" id="GIFHIRC"/>
<dbReference type="OrthoDB" id="5854685at2759"/>
<dbReference type="PhylomeDB" id="A2ALK8"/>
<dbReference type="TreeFam" id="TF315900"/>
<dbReference type="Reactome" id="R-MMU-182971">
    <property type="pathway name" value="EGFR downregulation"/>
</dbReference>
<dbReference type="Reactome" id="R-MMU-5675221">
    <property type="pathway name" value="Negative regulation of MAPK pathway"/>
</dbReference>
<dbReference type="BioGRID-ORCS" id="545622">
    <property type="hits" value="1 hit in 78 CRISPR screens"/>
</dbReference>
<dbReference type="ChiTaRS" id="Ptpn3">
    <property type="organism name" value="mouse"/>
</dbReference>
<dbReference type="PRO" id="PR:A2ALK8"/>
<dbReference type="Proteomes" id="UP000000589">
    <property type="component" value="Chromosome 4"/>
</dbReference>
<dbReference type="RNAct" id="A2ALK8">
    <property type="molecule type" value="protein"/>
</dbReference>
<dbReference type="Bgee" id="ENSMUSG00000038764">
    <property type="expression patterns" value="Expressed in medial dorsal nucleus of thalamus and 226 other cell types or tissues"/>
</dbReference>
<dbReference type="ExpressionAtlas" id="A2ALK8">
    <property type="expression patterns" value="baseline and differential"/>
</dbReference>
<dbReference type="GO" id="GO:0005737">
    <property type="term" value="C:cytoplasm"/>
    <property type="evidence" value="ECO:0007669"/>
    <property type="project" value="UniProtKB-KW"/>
</dbReference>
<dbReference type="GO" id="GO:0009898">
    <property type="term" value="C:cytoplasmic side of plasma membrane"/>
    <property type="evidence" value="ECO:0007669"/>
    <property type="project" value="Ensembl"/>
</dbReference>
<dbReference type="GO" id="GO:0005856">
    <property type="term" value="C:cytoskeleton"/>
    <property type="evidence" value="ECO:0007669"/>
    <property type="project" value="UniProtKB-SubCell"/>
</dbReference>
<dbReference type="GO" id="GO:0051117">
    <property type="term" value="F:ATPase binding"/>
    <property type="evidence" value="ECO:0007669"/>
    <property type="project" value="Ensembl"/>
</dbReference>
<dbReference type="GO" id="GO:0008092">
    <property type="term" value="F:cytoskeletal protein binding"/>
    <property type="evidence" value="ECO:0007669"/>
    <property type="project" value="InterPro"/>
</dbReference>
<dbReference type="GO" id="GO:0001784">
    <property type="term" value="F:phosphotyrosine residue binding"/>
    <property type="evidence" value="ECO:0007669"/>
    <property type="project" value="Ensembl"/>
</dbReference>
<dbReference type="GO" id="GO:0004725">
    <property type="term" value="F:protein tyrosine phosphatase activity"/>
    <property type="evidence" value="ECO:0000250"/>
    <property type="project" value="UniProtKB"/>
</dbReference>
<dbReference type="GO" id="GO:0017080">
    <property type="term" value="F:sodium channel regulator activity"/>
    <property type="evidence" value="ECO:0007669"/>
    <property type="project" value="Ensembl"/>
</dbReference>
<dbReference type="GO" id="GO:0051045">
    <property type="term" value="P:negative regulation of membrane protein ectodomain proteolysis"/>
    <property type="evidence" value="ECO:0007669"/>
    <property type="project" value="Ensembl"/>
</dbReference>
<dbReference type="GO" id="GO:0045930">
    <property type="term" value="P:negative regulation of mitotic cell cycle"/>
    <property type="evidence" value="ECO:0007669"/>
    <property type="project" value="Ensembl"/>
</dbReference>
<dbReference type="GO" id="GO:0098902">
    <property type="term" value="P:regulation of membrane depolarization during action potential"/>
    <property type="evidence" value="ECO:0007669"/>
    <property type="project" value="Ensembl"/>
</dbReference>
<dbReference type="GO" id="GO:1902305">
    <property type="term" value="P:regulation of sodium ion transmembrane transport"/>
    <property type="evidence" value="ECO:0007669"/>
    <property type="project" value="Ensembl"/>
</dbReference>
<dbReference type="CDD" id="cd14473">
    <property type="entry name" value="FERM_B-lobe"/>
    <property type="match status" value="1"/>
</dbReference>
<dbReference type="CDD" id="cd13189">
    <property type="entry name" value="FERM_C_PTPN4_PTPN3_like"/>
    <property type="match status" value="1"/>
</dbReference>
<dbReference type="CDD" id="cd06706">
    <property type="entry name" value="PDZ_PTPN3-4-like"/>
    <property type="match status" value="1"/>
</dbReference>
<dbReference type="CDD" id="cd14600">
    <property type="entry name" value="PTPc-N3"/>
    <property type="match status" value="1"/>
</dbReference>
<dbReference type="FunFam" id="2.30.29.30:FF:000002">
    <property type="entry name" value="Band 4.1-like protein 5 isoform 1"/>
    <property type="match status" value="1"/>
</dbReference>
<dbReference type="FunFam" id="2.30.42.10:FF:000045">
    <property type="entry name" value="Tyrosine-protein phosphatase non-receptor type"/>
    <property type="match status" value="1"/>
</dbReference>
<dbReference type="FunFam" id="3.10.20.90:FF:000104">
    <property type="entry name" value="Tyrosine-protein phosphatase non-receptor type"/>
    <property type="match status" value="1"/>
</dbReference>
<dbReference type="FunFam" id="3.90.190.10:FF:000023">
    <property type="entry name" value="Tyrosine-protein phosphatase non-receptor type"/>
    <property type="match status" value="1"/>
</dbReference>
<dbReference type="FunFam" id="1.20.80.10:FF:000003">
    <property type="entry name" value="Tyrosine-protein phosphatase non-receptor type 4"/>
    <property type="match status" value="1"/>
</dbReference>
<dbReference type="Gene3D" id="1.20.80.10">
    <property type="match status" value="1"/>
</dbReference>
<dbReference type="Gene3D" id="2.30.42.10">
    <property type="match status" value="1"/>
</dbReference>
<dbReference type="Gene3D" id="3.10.20.90">
    <property type="entry name" value="Phosphatidylinositol 3-kinase Catalytic Subunit, Chain A, domain 1"/>
    <property type="match status" value="1"/>
</dbReference>
<dbReference type="Gene3D" id="2.30.29.30">
    <property type="entry name" value="Pleckstrin-homology domain (PH domain)/Phosphotyrosine-binding domain (PTB)"/>
    <property type="match status" value="1"/>
</dbReference>
<dbReference type="Gene3D" id="3.90.190.10">
    <property type="entry name" value="Protein tyrosine phosphatase superfamily"/>
    <property type="match status" value="1"/>
</dbReference>
<dbReference type="InterPro" id="IPR019749">
    <property type="entry name" value="Band_41_domain"/>
</dbReference>
<dbReference type="InterPro" id="IPR014352">
    <property type="entry name" value="FERM/acyl-CoA-bd_prot_sf"/>
</dbReference>
<dbReference type="InterPro" id="IPR035963">
    <property type="entry name" value="FERM_2"/>
</dbReference>
<dbReference type="InterPro" id="IPR019748">
    <property type="entry name" value="FERM_central"/>
</dbReference>
<dbReference type="InterPro" id="IPR019747">
    <property type="entry name" value="FERM_CS"/>
</dbReference>
<dbReference type="InterPro" id="IPR000299">
    <property type="entry name" value="FERM_domain"/>
</dbReference>
<dbReference type="InterPro" id="IPR018979">
    <property type="entry name" value="FERM_N"/>
</dbReference>
<dbReference type="InterPro" id="IPR018980">
    <property type="entry name" value="FERM_PH-like_C"/>
</dbReference>
<dbReference type="InterPro" id="IPR001478">
    <property type="entry name" value="PDZ"/>
</dbReference>
<dbReference type="InterPro" id="IPR036034">
    <property type="entry name" value="PDZ_sf"/>
</dbReference>
<dbReference type="InterPro" id="IPR011993">
    <property type="entry name" value="PH-like_dom_sf"/>
</dbReference>
<dbReference type="InterPro" id="IPR029021">
    <property type="entry name" value="Prot-tyrosine_phosphatase-like"/>
</dbReference>
<dbReference type="InterPro" id="IPR000242">
    <property type="entry name" value="PTP_cat"/>
</dbReference>
<dbReference type="InterPro" id="IPR041783">
    <property type="entry name" value="PTPN3/4_FERM_C"/>
</dbReference>
<dbReference type="InterPro" id="IPR016130">
    <property type="entry name" value="Tyr_Pase_AS"/>
</dbReference>
<dbReference type="InterPro" id="IPR003595">
    <property type="entry name" value="Tyr_Pase_cat"/>
</dbReference>
<dbReference type="InterPro" id="IPR000387">
    <property type="entry name" value="Tyr_Pase_dom"/>
</dbReference>
<dbReference type="InterPro" id="IPR012151">
    <property type="entry name" value="Tyr_Pase_non-rcpt_typ-3/4"/>
</dbReference>
<dbReference type="InterPro" id="IPR029071">
    <property type="entry name" value="Ubiquitin-like_domsf"/>
</dbReference>
<dbReference type="PANTHER" id="PTHR45706">
    <property type="entry name" value="TYROSINE-PROTEIN PHOSPHATASE"/>
    <property type="match status" value="1"/>
</dbReference>
<dbReference type="PANTHER" id="PTHR45706:SF5">
    <property type="entry name" value="TYROSINE-PROTEIN PHOSPHATASE NON-RECEPTOR TYPE 3"/>
    <property type="match status" value="1"/>
</dbReference>
<dbReference type="Pfam" id="PF09380">
    <property type="entry name" value="FERM_C"/>
    <property type="match status" value="1"/>
</dbReference>
<dbReference type="Pfam" id="PF00373">
    <property type="entry name" value="FERM_M"/>
    <property type="match status" value="1"/>
</dbReference>
<dbReference type="Pfam" id="PF09379">
    <property type="entry name" value="FERM_N"/>
    <property type="match status" value="1"/>
</dbReference>
<dbReference type="Pfam" id="PF00595">
    <property type="entry name" value="PDZ"/>
    <property type="match status" value="1"/>
</dbReference>
<dbReference type="Pfam" id="PF00102">
    <property type="entry name" value="Y_phosphatase"/>
    <property type="match status" value="1"/>
</dbReference>
<dbReference type="PIRSF" id="PIRSF000927">
    <property type="entry name" value="Tyr-Ptase_nr3"/>
    <property type="match status" value="1"/>
</dbReference>
<dbReference type="PRINTS" id="PR00935">
    <property type="entry name" value="BAND41"/>
</dbReference>
<dbReference type="PRINTS" id="PR00700">
    <property type="entry name" value="PRTYPHPHTASE"/>
</dbReference>
<dbReference type="SMART" id="SM00295">
    <property type="entry name" value="B41"/>
    <property type="match status" value="1"/>
</dbReference>
<dbReference type="SMART" id="SM01196">
    <property type="entry name" value="FERM_C"/>
    <property type="match status" value="1"/>
</dbReference>
<dbReference type="SMART" id="SM00228">
    <property type="entry name" value="PDZ"/>
    <property type="match status" value="1"/>
</dbReference>
<dbReference type="SMART" id="SM00194">
    <property type="entry name" value="PTPc"/>
    <property type="match status" value="1"/>
</dbReference>
<dbReference type="SMART" id="SM00404">
    <property type="entry name" value="PTPc_motif"/>
    <property type="match status" value="1"/>
</dbReference>
<dbReference type="SUPFAM" id="SSF52799">
    <property type="entry name" value="(Phosphotyrosine protein) phosphatases II"/>
    <property type="match status" value="1"/>
</dbReference>
<dbReference type="SUPFAM" id="SSF50156">
    <property type="entry name" value="PDZ domain-like"/>
    <property type="match status" value="1"/>
</dbReference>
<dbReference type="SUPFAM" id="SSF50729">
    <property type="entry name" value="PH domain-like"/>
    <property type="match status" value="1"/>
</dbReference>
<dbReference type="SUPFAM" id="SSF47031">
    <property type="entry name" value="Second domain of FERM"/>
    <property type="match status" value="1"/>
</dbReference>
<dbReference type="SUPFAM" id="SSF54236">
    <property type="entry name" value="Ubiquitin-like"/>
    <property type="match status" value="1"/>
</dbReference>
<dbReference type="PROSITE" id="PS00661">
    <property type="entry name" value="FERM_2"/>
    <property type="match status" value="1"/>
</dbReference>
<dbReference type="PROSITE" id="PS50057">
    <property type="entry name" value="FERM_3"/>
    <property type="match status" value="1"/>
</dbReference>
<dbReference type="PROSITE" id="PS50106">
    <property type="entry name" value="PDZ"/>
    <property type="match status" value="1"/>
</dbReference>
<dbReference type="PROSITE" id="PS00383">
    <property type="entry name" value="TYR_PHOSPHATASE_1"/>
    <property type="match status" value="1"/>
</dbReference>
<dbReference type="PROSITE" id="PS50056">
    <property type="entry name" value="TYR_PHOSPHATASE_2"/>
    <property type="match status" value="1"/>
</dbReference>
<dbReference type="PROSITE" id="PS50055">
    <property type="entry name" value="TYR_PHOSPHATASE_PTP"/>
    <property type="match status" value="1"/>
</dbReference>
<organism>
    <name type="scientific">Mus musculus</name>
    <name type="common">Mouse</name>
    <dbReference type="NCBI Taxonomy" id="10090"/>
    <lineage>
        <taxon>Eukaryota</taxon>
        <taxon>Metazoa</taxon>
        <taxon>Chordata</taxon>
        <taxon>Craniata</taxon>
        <taxon>Vertebrata</taxon>
        <taxon>Euteleostomi</taxon>
        <taxon>Mammalia</taxon>
        <taxon>Eutheria</taxon>
        <taxon>Euarchontoglires</taxon>
        <taxon>Glires</taxon>
        <taxon>Rodentia</taxon>
        <taxon>Myomorpha</taxon>
        <taxon>Muroidea</taxon>
        <taxon>Muridae</taxon>
        <taxon>Murinae</taxon>
        <taxon>Mus</taxon>
        <taxon>Mus</taxon>
    </lineage>
</organism>
<reference key="1">
    <citation type="journal article" date="2009" name="PLoS Biol.">
        <title>Lineage-specific biology revealed by a finished genome assembly of the mouse.</title>
        <authorList>
            <person name="Church D.M."/>
            <person name="Goodstadt L."/>
            <person name="Hillier L.W."/>
            <person name="Zody M.C."/>
            <person name="Goldstein S."/>
            <person name="She X."/>
            <person name="Bult C.J."/>
            <person name="Agarwala R."/>
            <person name="Cherry J.L."/>
            <person name="DiCuccio M."/>
            <person name="Hlavina W."/>
            <person name="Kapustin Y."/>
            <person name="Meric P."/>
            <person name="Maglott D."/>
            <person name="Birtle Z."/>
            <person name="Marques A.C."/>
            <person name="Graves T."/>
            <person name="Zhou S."/>
            <person name="Teague B."/>
            <person name="Potamousis K."/>
            <person name="Churas C."/>
            <person name="Place M."/>
            <person name="Herschleb J."/>
            <person name="Runnheim R."/>
            <person name="Forrest D."/>
            <person name="Amos-Landgraf J."/>
            <person name="Schwartz D.C."/>
            <person name="Cheng Z."/>
            <person name="Lindblad-Toh K."/>
            <person name="Eichler E.E."/>
            <person name="Ponting C.P."/>
        </authorList>
    </citation>
    <scope>NUCLEOTIDE SEQUENCE [LARGE SCALE GENOMIC DNA]</scope>
    <source>
        <strain>C57BL/6J</strain>
    </source>
</reference>
<reference key="2">
    <citation type="journal article" date="2010" name="Cell">
        <title>A tissue-specific atlas of mouse protein phosphorylation and expression.</title>
        <authorList>
            <person name="Huttlin E.L."/>
            <person name="Jedrychowski M.P."/>
            <person name="Elias J.E."/>
            <person name="Goswami T."/>
            <person name="Rad R."/>
            <person name="Beausoleil S.A."/>
            <person name="Villen J."/>
            <person name="Haas W."/>
            <person name="Sowa M.E."/>
            <person name="Gygi S.P."/>
        </authorList>
    </citation>
    <scope>IDENTIFICATION BY MASS SPECTROMETRY [LARGE SCALE ANALYSIS]</scope>
    <source>
        <tissue>Brain</tissue>
    </source>
</reference>
<name>PTN3_MOUSE</name>